<reference key="1">
    <citation type="journal article" date="2005" name="Infect. Immun.">
        <title>Whole-genome analyses of speciation events in pathogenic Brucellae.</title>
        <authorList>
            <person name="Chain P.S."/>
            <person name="Comerci D.J."/>
            <person name="Tolmasky M.E."/>
            <person name="Larimer F.W."/>
            <person name="Malfatti S.A."/>
            <person name="Vergez L.M."/>
            <person name="Aguero F."/>
            <person name="Land M.L."/>
            <person name="Ugalde R.A."/>
            <person name="Garcia E."/>
        </authorList>
    </citation>
    <scope>NUCLEOTIDE SEQUENCE [LARGE SCALE GENOMIC DNA]</scope>
    <source>
        <strain>2308</strain>
    </source>
</reference>
<keyword id="KW-0067">ATP-binding</keyword>
<keyword id="KW-0997">Cell inner membrane</keyword>
<keyword id="KW-1003">Cell membrane</keyword>
<keyword id="KW-0472">Membrane</keyword>
<keyword id="KW-0547">Nucleotide-binding</keyword>
<keyword id="KW-1185">Reference proteome</keyword>
<keyword id="KW-0677">Repeat</keyword>
<keyword id="KW-0762">Sugar transport</keyword>
<keyword id="KW-1278">Translocase</keyword>
<keyword id="KW-0813">Transport</keyword>
<dbReference type="EC" id="7.5.2.10" evidence="1"/>
<dbReference type="EMBL" id="AM040265">
    <property type="protein sequence ID" value="CAJ13276.1"/>
    <property type="molecule type" value="Genomic_DNA"/>
</dbReference>
<dbReference type="RefSeq" id="WP_002966631.1">
    <property type="nucleotide sequence ID" value="NZ_KN046823.1"/>
</dbReference>
<dbReference type="SMR" id="Q2YJE7"/>
<dbReference type="STRING" id="359391.BAB2_1110"/>
<dbReference type="KEGG" id="bmf:BAB2_1110"/>
<dbReference type="PATRIC" id="fig|359391.11.peg.1896"/>
<dbReference type="HOGENOM" id="CLU_000604_92_3_5"/>
<dbReference type="PhylomeDB" id="Q2YJE7"/>
<dbReference type="Proteomes" id="UP000002719">
    <property type="component" value="Chromosome II"/>
</dbReference>
<dbReference type="GO" id="GO:0005886">
    <property type="term" value="C:plasma membrane"/>
    <property type="evidence" value="ECO:0007669"/>
    <property type="project" value="UniProtKB-SubCell"/>
</dbReference>
<dbReference type="GO" id="GO:0015614">
    <property type="term" value="F:ABC-type D-xylose transporter activity"/>
    <property type="evidence" value="ECO:0007669"/>
    <property type="project" value="UniProtKB-EC"/>
</dbReference>
<dbReference type="GO" id="GO:0005524">
    <property type="term" value="F:ATP binding"/>
    <property type="evidence" value="ECO:0007669"/>
    <property type="project" value="UniProtKB-KW"/>
</dbReference>
<dbReference type="GO" id="GO:0016887">
    <property type="term" value="F:ATP hydrolysis activity"/>
    <property type="evidence" value="ECO:0007669"/>
    <property type="project" value="InterPro"/>
</dbReference>
<dbReference type="CDD" id="cd03216">
    <property type="entry name" value="ABC_Carb_Monos_I"/>
    <property type="match status" value="1"/>
</dbReference>
<dbReference type="CDD" id="cd03215">
    <property type="entry name" value="ABC_Carb_Monos_II"/>
    <property type="match status" value="1"/>
</dbReference>
<dbReference type="FunFam" id="3.40.50.300:FF:000126">
    <property type="entry name" value="Galactose/methyl galactoside import ATP-binding protein MglA"/>
    <property type="match status" value="1"/>
</dbReference>
<dbReference type="FunFam" id="3.40.50.300:FF:000127">
    <property type="entry name" value="Ribose import ATP-binding protein RbsA"/>
    <property type="match status" value="1"/>
</dbReference>
<dbReference type="Gene3D" id="3.40.50.300">
    <property type="entry name" value="P-loop containing nucleotide triphosphate hydrolases"/>
    <property type="match status" value="2"/>
</dbReference>
<dbReference type="InterPro" id="IPR003593">
    <property type="entry name" value="AAA+_ATPase"/>
</dbReference>
<dbReference type="InterPro" id="IPR050107">
    <property type="entry name" value="ABC_carbohydrate_import_ATPase"/>
</dbReference>
<dbReference type="InterPro" id="IPR003439">
    <property type="entry name" value="ABC_transporter-like_ATP-bd"/>
</dbReference>
<dbReference type="InterPro" id="IPR017871">
    <property type="entry name" value="ABC_transporter-like_CS"/>
</dbReference>
<dbReference type="InterPro" id="IPR013455">
    <property type="entry name" value="ABC_transptr_XylG"/>
</dbReference>
<dbReference type="InterPro" id="IPR027417">
    <property type="entry name" value="P-loop_NTPase"/>
</dbReference>
<dbReference type="NCBIfam" id="NF010069">
    <property type="entry name" value="PRK13549.1"/>
    <property type="match status" value="1"/>
</dbReference>
<dbReference type="NCBIfam" id="TIGR02633">
    <property type="entry name" value="xylG"/>
    <property type="match status" value="1"/>
</dbReference>
<dbReference type="PANTHER" id="PTHR43790">
    <property type="entry name" value="CARBOHYDRATE TRANSPORT ATP-BINDING PROTEIN MG119-RELATED"/>
    <property type="match status" value="1"/>
</dbReference>
<dbReference type="PANTHER" id="PTHR43790:SF1">
    <property type="entry name" value="XYLOSE IMPORT ATP-BINDING PROTEIN XYLG"/>
    <property type="match status" value="1"/>
</dbReference>
<dbReference type="Pfam" id="PF00005">
    <property type="entry name" value="ABC_tran"/>
    <property type="match status" value="2"/>
</dbReference>
<dbReference type="SMART" id="SM00382">
    <property type="entry name" value="AAA"/>
    <property type="match status" value="2"/>
</dbReference>
<dbReference type="SUPFAM" id="SSF52540">
    <property type="entry name" value="P-loop containing nucleoside triphosphate hydrolases"/>
    <property type="match status" value="2"/>
</dbReference>
<dbReference type="PROSITE" id="PS00211">
    <property type="entry name" value="ABC_TRANSPORTER_1"/>
    <property type="match status" value="1"/>
</dbReference>
<dbReference type="PROSITE" id="PS50893">
    <property type="entry name" value="ABC_TRANSPORTER_2"/>
    <property type="match status" value="2"/>
</dbReference>
<dbReference type="PROSITE" id="PS51280">
    <property type="entry name" value="XYLG"/>
    <property type="match status" value="1"/>
</dbReference>
<name>XYLG_BRUA2</name>
<accession>Q2YJE7</accession>
<comment type="function">
    <text evidence="1">Part of the ABC transporter complex XylFGH involved in xylose import. Responsible for energy coupling to the transport system.</text>
</comment>
<comment type="catalytic activity">
    <reaction evidence="1">
        <text>D-xylose(out) + ATP + H2O = D-xylose(in) + ADP + phosphate + H(+)</text>
        <dbReference type="Rhea" id="RHEA:29899"/>
        <dbReference type="ChEBI" id="CHEBI:15377"/>
        <dbReference type="ChEBI" id="CHEBI:15378"/>
        <dbReference type="ChEBI" id="CHEBI:30616"/>
        <dbReference type="ChEBI" id="CHEBI:43474"/>
        <dbReference type="ChEBI" id="CHEBI:53455"/>
        <dbReference type="ChEBI" id="CHEBI:456216"/>
        <dbReference type="EC" id="7.5.2.10"/>
    </reaction>
</comment>
<comment type="subunit">
    <text evidence="1">The complex is composed of two ATP-binding proteins (XylG), two transmembrane proteins (XylH) and a solute-binding protein (XylF).</text>
</comment>
<comment type="subcellular location">
    <subcellularLocation>
        <location evidence="1">Cell inner membrane</location>
        <topology evidence="1">Peripheral membrane protein</topology>
    </subcellularLocation>
</comment>
<comment type="similarity">
    <text evidence="1">Belongs to the ABC transporter superfamily. Xylose importer (TC 3.A.1.2.4) family.</text>
</comment>
<evidence type="ECO:0000255" key="1">
    <source>
        <dbReference type="HAMAP-Rule" id="MF_01722"/>
    </source>
</evidence>
<organism>
    <name type="scientific">Brucella abortus (strain 2308)</name>
    <dbReference type="NCBI Taxonomy" id="359391"/>
    <lineage>
        <taxon>Bacteria</taxon>
        <taxon>Pseudomonadati</taxon>
        <taxon>Pseudomonadota</taxon>
        <taxon>Alphaproteobacteria</taxon>
        <taxon>Hyphomicrobiales</taxon>
        <taxon>Brucellaceae</taxon>
        <taxon>Brucella/Ochrobactrum group</taxon>
        <taxon>Brucella</taxon>
    </lineage>
</organism>
<gene>
    <name evidence="1" type="primary">xylG</name>
    <name type="ordered locus">BAB2_1110</name>
</gene>
<feature type="chain" id="PRO_0000271494" description="Xylose import ATP-binding protein XylG">
    <location>
        <begin position="1"/>
        <end position="511"/>
    </location>
</feature>
<feature type="domain" description="ABC transporter 1" evidence="1">
    <location>
        <begin position="6"/>
        <end position="244"/>
    </location>
</feature>
<feature type="domain" description="ABC transporter 2" evidence="1">
    <location>
        <begin position="261"/>
        <end position="506"/>
    </location>
</feature>
<feature type="binding site" evidence="1">
    <location>
        <begin position="38"/>
        <end position="45"/>
    </location>
    <ligand>
        <name>ATP</name>
        <dbReference type="ChEBI" id="CHEBI:30616"/>
    </ligand>
</feature>
<protein>
    <recommendedName>
        <fullName evidence="1">Xylose import ATP-binding protein XylG</fullName>
        <ecNumber evidence="1">7.5.2.10</ecNumber>
    </recommendedName>
</protein>
<sequence length="511" mass="55814">MSEYLLEMRNIGKEFNGVKALDGIYLKVRAGECVGLCGENGAGKSTLMKVLSGVYPHGTWTGEIFWEGKELKASGIRDTEAAGIVIIHQELMMVPHLSVAENIFLGCEPTTGGFIDYDQMNARAAELLARLKINDINVALPVYHYSGGKQQLIEIAKAINKNAKLLILDEPTSALTASETRVLIDLIKDFKKQGMACVYISHKLDEVAEISDTVTVIRDGAHIATRPMSELTTPDIITMMVGREMKNLFPREPHDIGEVMFEARNISCWDVTNPGRKVVDDVSFALRRGEILGIAGLVGAGRTELVSSLFGVWPGACQGQVFLEGKEIKIRTPRDAVRQGICMVPEDRKRDGILPIMPVGHNMTISVLDRFSLRGLIDKDAELVAIQREILRLKVKTADPMLAIASLSGGNQQKAVLSKMMLPDPKVLILDEPTRGVDVGAKYEIYKLIFALARQGVSILMVSSEMPEVLGISDRVLVIGEGKLRGDFPNENLTQEKVLAAAIGKPATNAA</sequence>
<proteinExistence type="inferred from homology"/>